<keyword id="KW-0028">Amino-acid biosynthesis</keyword>
<keyword id="KW-0368">Histidine biosynthesis</keyword>
<keyword id="KW-0378">Hydrolase</keyword>
<keyword id="KW-0486">Methionine biosynthesis</keyword>
<keyword id="KW-0511">Multifunctional enzyme</keyword>
<keyword id="KW-0521">NADP</keyword>
<keyword id="KW-0554">One-carbon metabolism</keyword>
<keyword id="KW-0560">Oxidoreductase</keyword>
<keyword id="KW-0658">Purine biosynthesis</keyword>
<keyword id="KW-1185">Reference proteome</keyword>
<organism>
    <name type="scientific">Clostridium kluyveri (strain ATCC 8527 / DSM 555 / NBRC 12016 / NCIMB 10680 / K1)</name>
    <dbReference type="NCBI Taxonomy" id="431943"/>
    <lineage>
        <taxon>Bacteria</taxon>
        <taxon>Bacillati</taxon>
        <taxon>Bacillota</taxon>
        <taxon>Clostridia</taxon>
        <taxon>Eubacteriales</taxon>
        <taxon>Clostridiaceae</taxon>
        <taxon>Clostridium</taxon>
    </lineage>
</organism>
<dbReference type="EC" id="1.5.1.5" evidence="1"/>
<dbReference type="EC" id="3.5.4.9" evidence="1"/>
<dbReference type="EMBL" id="CP000673">
    <property type="protein sequence ID" value="EDK32496.1"/>
    <property type="molecule type" value="Genomic_DNA"/>
</dbReference>
<dbReference type="RefSeq" id="WP_011989011.1">
    <property type="nucleotide sequence ID" value="NC_009706.1"/>
</dbReference>
<dbReference type="SMR" id="A5N5B5"/>
<dbReference type="STRING" id="431943.CKL_0442"/>
<dbReference type="KEGG" id="ckl:CKL_0442"/>
<dbReference type="eggNOG" id="COG0190">
    <property type="taxonomic scope" value="Bacteria"/>
</dbReference>
<dbReference type="HOGENOM" id="CLU_034045_2_1_9"/>
<dbReference type="UniPathway" id="UPA00193"/>
<dbReference type="Proteomes" id="UP000002411">
    <property type="component" value="Chromosome"/>
</dbReference>
<dbReference type="GO" id="GO:0005829">
    <property type="term" value="C:cytosol"/>
    <property type="evidence" value="ECO:0007669"/>
    <property type="project" value="TreeGrafter"/>
</dbReference>
<dbReference type="GO" id="GO:0004477">
    <property type="term" value="F:methenyltetrahydrofolate cyclohydrolase activity"/>
    <property type="evidence" value="ECO:0007669"/>
    <property type="project" value="UniProtKB-UniRule"/>
</dbReference>
<dbReference type="GO" id="GO:0004488">
    <property type="term" value="F:methylenetetrahydrofolate dehydrogenase (NADP+) activity"/>
    <property type="evidence" value="ECO:0007669"/>
    <property type="project" value="UniProtKB-UniRule"/>
</dbReference>
<dbReference type="GO" id="GO:0000105">
    <property type="term" value="P:L-histidine biosynthetic process"/>
    <property type="evidence" value="ECO:0007669"/>
    <property type="project" value="UniProtKB-KW"/>
</dbReference>
<dbReference type="GO" id="GO:0009086">
    <property type="term" value="P:methionine biosynthetic process"/>
    <property type="evidence" value="ECO:0007669"/>
    <property type="project" value="UniProtKB-KW"/>
</dbReference>
<dbReference type="GO" id="GO:0006164">
    <property type="term" value="P:purine nucleotide biosynthetic process"/>
    <property type="evidence" value="ECO:0007669"/>
    <property type="project" value="UniProtKB-KW"/>
</dbReference>
<dbReference type="GO" id="GO:0035999">
    <property type="term" value="P:tetrahydrofolate interconversion"/>
    <property type="evidence" value="ECO:0007669"/>
    <property type="project" value="UniProtKB-UniRule"/>
</dbReference>
<dbReference type="CDD" id="cd01080">
    <property type="entry name" value="NAD_bind_m-THF_DH_Cyclohyd"/>
    <property type="match status" value="1"/>
</dbReference>
<dbReference type="FunFam" id="3.40.50.720:FF:000094">
    <property type="entry name" value="Bifunctional protein FolD"/>
    <property type="match status" value="1"/>
</dbReference>
<dbReference type="Gene3D" id="3.40.50.10860">
    <property type="entry name" value="Leucine Dehydrogenase, chain A, domain 1"/>
    <property type="match status" value="1"/>
</dbReference>
<dbReference type="Gene3D" id="3.40.50.720">
    <property type="entry name" value="NAD(P)-binding Rossmann-like Domain"/>
    <property type="match status" value="1"/>
</dbReference>
<dbReference type="HAMAP" id="MF_01576">
    <property type="entry name" value="THF_DHG_CYH"/>
    <property type="match status" value="1"/>
</dbReference>
<dbReference type="InterPro" id="IPR046346">
    <property type="entry name" value="Aminoacid_DH-like_N_sf"/>
</dbReference>
<dbReference type="InterPro" id="IPR036291">
    <property type="entry name" value="NAD(P)-bd_dom_sf"/>
</dbReference>
<dbReference type="InterPro" id="IPR000672">
    <property type="entry name" value="THF_DH/CycHdrlase"/>
</dbReference>
<dbReference type="InterPro" id="IPR020630">
    <property type="entry name" value="THF_DH/CycHdrlase_cat_dom"/>
</dbReference>
<dbReference type="InterPro" id="IPR020631">
    <property type="entry name" value="THF_DH/CycHdrlase_NAD-bd_dom"/>
</dbReference>
<dbReference type="PANTHER" id="PTHR48099:SF5">
    <property type="entry name" value="C-1-TETRAHYDROFOLATE SYNTHASE, CYTOPLASMIC"/>
    <property type="match status" value="1"/>
</dbReference>
<dbReference type="PANTHER" id="PTHR48099">
    <property type="entry name" value="C-1-TETRAHYDROFOLATE SYNTHASE, CYTOPLASMIC-RELATED"/>
    <property type="match status" value="1"/>
</dbReference>
<dbReference type="Pfam" id="PF00763">
    <property type="entry name" value="THF_DHG_CYH"/>
    <property type="match status" value="1"/>
</dbReference>
<dbReference type="Pfam" id="PF02882">
    <property type="entry name" value="THF_DHG_CYH_C"/>
    <property type="match status" value="1"/>
</dbReference>
<dbReference type="PRINTS" id="PR00085">
    <property type="entry name" value="THFDHDRGNASE"/>
</dbReference>
<dbReference type="SUPFAM" id="SSF53223">
    <property type="entry name" value="Aminoacid dehydrogenase-like, N-terminal domain"/>
    <property type="match status" value="1"/>
</dbReference>
<dbReference type="SUPFAM" id="SSF51735">
    <property type="entry name" value="NAD(P)-binding Rossmann-fold domains"/>
    <property type="match status" value="1"/>
</dbReference>
<sequence>MGLIIKGKPVADAISETLIKEVDNFKIQGIIPKLVIIRVGAKASDLAYEKGILKRCNGIGIETYVKEFPEDISQREFIRELRRLNEDRNVDGIMVFRPLPKHLDENIIKYVITPEKDIDCFNPINLAKVIAGDSTGFAPCTPRAVMEILKYYNIDVEGKFSVVIGRSMIVGKPMSMLLLNENSTVTTCHSKTVHLDKICSQADILVAGIGKAEFIDSKYIKEGAVVIDVGINVDKYGKLCGDVDIKSCQWKNVIVTPVPGGVGTVTSSVLAQHVVEACKHKNKL</sequence>
<gene>
    <name evidence="1" type="primary">folD</name>
    <name type="ordered locus">CKL_0442</name>
</gene>
<protein>
    <recommendedName>
        <fullName evidence="1">Bifunctional protein FolD</fullName>
    </recommendedName>
    <domain>
        <recommendedName>
            <fullName evidence="1">Methylenetetrahydrofolate dehydrogenase</fullName>
            <ecNumber evidence="1">1.5.1.5</ecNumber>
        </recommendedName>
    </domain>
    <domain>
        <recommendedName>
            <fullName evidence="1">Methenyltetrahydrofolate cyclohydrolase</fullName>
            <ecNumber evidence="1">3.5.4.9</ecNumber>
        </recommendedName>
    </domain>
</protein>
<name>FOLD_CLOK5</name>
<comment type="function">
    <text evidence="1">Catalyzes the oxidation of 5,10-methylenetetrahydrofolate to 5,10-methenyltetrahydrofolate and then the hydrolysis of 5,10-methenyltetrahydrofolate to 10-formyltetrahydrofolate.</text>
</comment>
<comment type="catalytic activity">
    <reaction evidence="1">
        <text>(6R)-5,10-methylene-5,6,7,8-tetrahydrofolate + NADP(+) = (6R)-5,10-methenyltetrahydrofolate + NADPH</text>
        <dbReference type="Rhea" id="RHEA:22812"/>
        <dbReference type="ChEBI" id="CHEBI:15636"/>
        <dbReference type="ChEBI" id="CHEBI:57455"/>
        <dbReference type="ChEBI" id="CHEBI:57783"/>
        <dbReference type="ChEBI" id="CHEBI:58349"/>
        <dbReference type="EC" id="1.5.1.5"/>
    </reaction>
</comment>
<comment type="catalytic activity">
    <reaction evidence="1">
        <text>(6R)-5,10-methenyltetrahydrofolate + H2O = (6R)-10-formyltetrahydrofolate + H(+)</text>
        <dbReference type="Rhea" id="RHEA:23700"/>
        <dbReference type="ChEBI" id="CHEBI:15377"/>
        <dbReference type="ChEBI" id="CHEBI:15378"/>
        <dbReference type="ChEBI" id="CHEBI:57455"/>
        <dbReference type="ChEBI" id="CHEBI:195366"/>
        <dbReference type="EC" id="3.5.4.9"/>
    </reaction>
</comment>
<comment type="pathway">
    <text evidence="1">One-carbon metabolism; tetrahydrofolate interconversion.</text>
</comment>
<comment type="subunit">
    <text evidence="1">Homodimer.</text>
</comment>
<comment type="similarity">
    <text evidence="1">Belongs to the tetrahydrofolate dehydrogenase/cyclohydrolase family.</text>
</comment>
<reference key="1">
    <citation type="journal article" date="2008" name="Proc. Natl. Acad. Sci. U.S.A.">
        <title>The genome of Clostridium kluyveri, a strict anaerobe with unique metabolic features.</title>
        <authorList>
            <person name="Seedorf H."/>
            <person name="Fricke W.F."/>
            <person name="Veith B."/>
            <person name="Brueggemann H."/>
            <person name="Liesegang H."/>
            <person name="Strittmatter A."/>
            <person name="Miethke M."/>
            <person name="Buckel W."/>
            <person name="Hinderberger J."/>
            <person name="Li F."/>
            <person name="Hagemeier C."/>
            <person name="Thauer R.K."/>
            <person name="Gottschalk G."/>
        </authorList>
    </citation>
    <scope>NUCLEOTIDE SEQUENCE [LARGE SCALE GENOMIC DNA]</scope>
    <source>
        <strain>ATCC 8527 / DSM 555 / NBRC 12016 / NCIMB 10680 / K1</strain>
    </source>
</reference>
<evidence type="ECO:0000255" key="1">
    <source>
        <dbReference type="HAMAP-Rule" id="MF_01576"/>
    </source>
</evidence>
<proteinExistence type="inferred from homology"/>
<accession>A5N5B5</accession>
<feature type="chain" id="PRO_1000087895" description="Bifunctional protein FolD">
    <location>
        <begin position="1"/>
        <end position="284"/>
    </location>
</feature>
<feature type="binding site" evidence="1">
    <location>
        <begin position="165"/>
        <end position="167"/>
    </location>
    <ligand>
        <name>NADP(+)</name>
        <dbReference type="ChEBI" id="CHEBI:58349"/>
    </ligand>
</feature>
<feature type="binding site" evidence="1">
    <location>
        <position position="190"/>
    </location>
    <ligand>
        <name>NADP(+)</name>
        <dbReference type="ChEBI" id="CHEBI:58349"/>
    </ligand>
</feature>
<feature type="binding site" evidence="1">
    <location>
        <position position="231"/>
    </location>
    <ligand>
        <name>NADP(+)</name>
        <dbReference type="ChEBI" id="CHEBI:58349"/>
    </ligand>
</feature>